<protein>
    <recommendedName>
        <fullName evidence="1">Formate--tetrahydrofolate ligase</fullName>
        <ecNumber evidence="1">6.3.4.3</ecNumber>
    </recommendedName>
    <alternativeName>
        <fullName evidence="1">Formyltetrahydrofolate synthetase</fullName>
        <shortName evidence="1">FHS</shortName>
        <shortName evidence="1">FTHFS</shortName>
    </alternativeName>
</protein>
<feature type="chain" id="PRO_0000199365" description="Formate--tetrahydrofolate ligase">
    <location>
        <begin position="1"/>
        <end position="558"/>
    </location>
</feature>
<feature type="binding site" evidence="1">
    <location>
        <begin position="66"/>
        <end position="73"/>
    </location>
    <ligand>
        <name>ATP</name>
        <dbReference type="ChEBI" id="CHEBI:30616"/>
    </ligand>
</feature>
<evidence type="ECO:0000255" key="1">
    <source>
        <dbReference type="HAMAP-Rule" id="MF_01543"/>
    </source>
</evidence>
<organism>
    <name type="scientific">Neisseria meningitidis serogroup B (strain ATCC BAA-335 / MC58)</name>
    <dbReference type="NCBI Taxonomy" id="122586"/>
    <lineage>
        <taxon>Bacteria</taxon>
        <taxon>Pseudomonadati</taxon>
        <taxon>Pseudomonadota</taxon>
        <taxon>Betaproteobacteria</taxon>
        <taxon>Neisseriales</taxon>
        <taxon>Neisseriaceae</taxon>
        <taxon>Neisseria</taxon>
    </lineage>
</organism>
<dbReference type="EC" id="6.3.4.3" evidence="1"/>
<dbReference type="EMBL" id="AE002098">
    <property type="protein sequence ID" value="AAF42174.1"/>
    <property type="molecule type" value="Genomic_DNA"/>
</dbReference>
<dbReference type="PIR" id="E81037">
    <property type="entry name" value="E81037"/>
</dbReference>
<dbReference type="RefSeq" id="NP_274836.1">
    <property type="nucleotide sequence ID" value="NC_003112.2"/>
</dbReference>
<dbReference type="RefSeq" id="WP_002225668.1">
    <property type="nucleotide sequence ID" value="NC_003112.2"/>
</dbReference>
<dbReference type="SMR" id="Q9JXY2"/>
<dbReference type="STRING" id="122586.NMB1839"/>
<dbReference type="PaxDb" id="122586-NMB1839"/>
<dbReference type="KEGG" id="nme:NMB1839"/>
<dbReference type="PATRIC" id="fig|122586.8.peg.2348"/>
<dbReference type="HOGENOM" id="CLU_003601_3_3_4"/>
<dbReference type="InParanoid" id="Q9JXY2"/>
<dbReference type="OrthoDB" id="9761733at2"/>
<dbReference type="UniPathway" id="UPA00193"/>
<dbReference type="Proteomes" id="UP000000425">
    <property type="component" value="Chromosome"/>
</dbReference>
<dbReference type="GO" id="GO:0005524">
    <property type="term" value="F:ATP binding"/>
    <property type="evidence" value="ECO:0007669"/>
    <property type="project" value="UniProtKB-UniRule"/>
</dbReference>
<dbReference type="GO" id="GO:0004329">
    <property type="term" value="F:formate-tetrahydrofolate ligase activity"/>
    <property type="evidence" value="ECO:0007669"/>
    <property type="project" value="UniProtKB-UniRule"/>
</dbReference>
<dbReference type="GO" id="GO:0035999">
    <property type="term" value="P:tetrahydrofolate interconversion"/>
    <property type="evidence" value="ECO:0007669"/>
    <property type="project" value="UniProtKB-UniRule"/>
</dbReference>
<dbReference type="CDD" id="cd00477">
    <property type="entry name" value="FTHFS"/>
    <property type="match status" value="1"/>
</dbReference>
<dbReference type="FunFam" id="3.30.1510.10:FF:000001">
    <property type="entry name" value="Formate--tetrahydrofolate ligase"/>
    <property type="match status" value="1"/>
</dbReference>
<dbReference type="FunFam" id="3.10.410.10:FF:000001">
    <property type="entry name" value="Putative formate--tetrahydrofolate ligase"/>
    <property type="match status" value="1"/>
</dbReference>
<dbReference type="Gene3D" id="3.30.1510.10">
    <property type="entry name" value="Domain 2, N(10)-formyltetrahydrofolate synthetase"/>
    <property type="match status" value="1"/>
</dbReference>
<dbReference type="Gene3D" id="3.10.410.10">
    <property type="entry name" value="Formyltetrahydrofolate synthetase, domain 3"/>
    <property type="match status" value="1"/>
</dbReference>
<dbReference type="Gene3D" id="3.40.50.300">
    <property type="entry name" value="P-loop containing nucleotide triphosphate hydrolases"/>
    <property type="match status" value="1"/>
</dbReference>
<dbReference type="HAMAP" id="MF_01543">
    <property type="entry name" value="FTHFS"/>
    <property type="match status" value="1"/>
</dbReference>
<dbReference type="InterPro" id="IPR000559">
    <property type="entry name" value="Formate_THF_ligase"/>
</dbReference>
<dbReference type="InterPro" id="IPR020628">
    <property type="entry name" value="Formate_THF_ligase_CS"/>
</dbReference>
<dbReference type="InterPro" id="IPR027417">
    <property type="entry name" value="P-loop_NTPase"/>
</dbReference>
<dbReference type="NCBIfam" id="NF010030">
    <property type="entry name" value="PRK13505.1"/>
    <property type="match status" value="1"/>
</dbReference>
<dbReference type="Pfam" id="PF01268">
    <property type="entry name" value="FTHFS"/>
    <property type="match status" value="1"/>
</dbReference>
<dbReference type="SUPFAM" id="SSF52540">
    <property type="entry name" value="P-loop containing nucleoside triphosphate hydrolases"/>
    <property type="match status" value="1"/>
</dbReference>
<dbReference type="PROSITE" id="PS00721">
    <property type="entry name" value="FTHFS_1"/>
    <property type="match status" value="1"/>
</dbReference>
<dbReference type="PROSITE" id="PS00722">
    <property type="entry name" value="FTHFS_2"/>
    <property type="match status" value="1"/>
</dbReference>
<gene>
    <name evidence="1" type="primary">fhs</name>
    <name type="ordered locus">NMB1839</name>
</gene>
<accession>Q9JXY2</accession>
<keyword id="KW-0067">ATP-binding</keyword>
<keyword id="KW-0436">Ligase</keyword>
<keyword id="KW-0547">Nucleotide-binding</keyword>
<keyword id="KW-0554">One-carbon metabolism</keyword>
<keyword id="KW-1185">Reference proteome</keyword>
<name>FTHS_NEIMB</name>
<comment type="catalytic activity">
    <reaction evidence="1">
        <text>(6S)-5,6,7,8-tetrahydrofolate + formate + ATP = (6R)-10-formyltetrahydrofolate + ADP + phosphate</text>
        <dbReference type="Rhea" id="RHEA:20221"/>
        <dbReference type="ChEBI" id="CHEBI:15740"/>
        <dbReference type="ChEBI" id="CHEBI:30616"/>
        <dbReference type="ChEBI" id="CHEBI:43474"/>
        <dbReference type="ChEBI" id="CHEBI:57453"/>
        <dbReference type="ChEBI" id="CHEBI:195366"/>
        <dbReference type="ChEBI" id="CHEBI:456216"/>
        <dbReference type="EC" id="6.3.4.3"/>
    </reaction>
</comment>
<comment type="pathway">
    <text evidence="1">One-carbon metabolism; tetrahydrofolate interconversion.</text>
</comment>
<comment type="similarity">
    <text evidence="1">Belongs to the formate--tetrahydrofolate ligase family.</text>
</comment>
<reference key="1">
    <citation type="journal article" date="2000" name="Science">
        <title>Complete genome sequence of Neisseria meningitidis serogroup B strain MC58.</title>
        <authorList>
            <person name="Tettelin H."/>
            <person name="Saunders N.J."/>
            <person name="Heidelberg J.F."/>
            <person name="Jeffries A.C."/>
            <person name="Nelson K.E."/>
            <person name="Eisen J.A."/>
            <person name="Ketchum K.A."/>
            <person name="Hood D.W."/>
            <person name="Peden J.F."/>
            <person name="Dodson R.J."/>
            <person name="Nelson W.C."/>
            <person name="Gwinn M.L."/>
            <person name="DeBoy R.T."/>
            <person name="Peterson J.D."/>
            <person name="Hickey E.K."/>
            <person name="Haft D.H."/>
            <person name="Salzberg S.L."/>
            <person name="White O."/>
            <person name="Fleischmann R.D."/>
            <person name="Dougherty B.A."/>
            <person name="Mason T.M."/>
            <person name="Ciecko A."/>
            <person name="Parksey D.S."/>
            <person name="Blair E."/>
            <person name="Cittone H."/>
            <person name="Clark E.B."/>
            <person name="Cotton M.D."/>
            <person name="Utterback T.R."/>
            <person name="Khouri H.M."/>
            <person name="Qin H."/>
            <person name="Vamathevan J.J."/>
            <person name="Gill J."/>
            <person name="Scarlato V."/>
            <person name="Masignani V."/>
            <person name="Pizza M."/>
            <person name="Grandi G."/>
            <person name="Sun L."/>
            <person name="Smith H.O."/>
            <person name="Fraser C.M."/>
            <person name="Moxon E.R."/>
            <person name="Rappuoli R."/>
            <person name="Venter J.C."/>
        </authorList>
    </citation>
    <scope>NUCLEOTIDE SEQUENCE [LARGE SCALE GENOMIC DNA]</scope>
    <source>
        <strain>ATCC BAA-335 / MC58</strain>
    </source>
</reference>
<sequence length="558" mass="59062">MSFKTDAEIAQSSTMRPIGEIAAKLGLNADNIEPYGHYKAKINPAEAFKLPQKQGRLILVTAINPTPAGEGKTTVTIGLADALRHIGKDAVIALREPSLGPVFGVKGGAAGGGYAQVLPMEDINLHFTGDFHAIGAANNLLAAMLDNHIYQGNELNIDPKRVLWRRVVDMNDRQLRNIIDGMGKPVDGVMRPDGFDITVASEVMAVFCLAKDISDLKERLGNILVAYAKDGSPVYAKDLKANGAMAALLKDAIKPNLVQTIEGTPAFVHGGPFANIAHGCNSVTATRLAKHLADYAVTEAGFGADLGAEKFCDIKCRLAGLKPDAAVVVATVRALKYNGGVERANLGEENLDALEKGLPNLLKHISNLKNVFGLPVVVALNRFVSDADAELAMIEKACAEHGVEVSLTEVWGKGGAGGADLARKVVNAIESQTNNFGFAYDVELGIKDKIRAIAQKVYGAEDVDFSAEASAEIASLEKLGLDKMPICMAKTQYSLSDNAKLLGCPEDFRIAVRGITVSAGAGFIVALCGNMMKMPGLPKVPAAEKIDVDAEGVIHGLF</sequence>
<proteinExistence type="inferred from homology"/>